<name>TFS4_SACS2</name>
<protein>
    <recommendedName>
        <fullName evidence="6">Transcription factor S4</fullName>
        <shortName evidence="6">TFS4</shortName>
    </recommendedName>
</protein>
<comment type="function">
    <text evidence="3 4">A potent inhibitor of RNA polymerase (RNAP) probably involved in viral defense. Destabilizes the transcription pre-initiation complex of TBP, TFB, DNA and RNAP, inhibits abortive transcription initiation, productive initiation and transcription elongation. Increases the RNAP KM for NTPs about 50-fold. Overexpression of TFS1-tip4 (TFS1 with the active tip of this protein, phenocopies this protein) in S.acidocaldarius MW001 leads to severe growth inhibition (PubMed:29203770). When bound to RNAP induces conformational changes that widen the DNA-binding channel, probably destabilizing the interaction of DNA with RNAP (PubMed:34535646).</text>
</comment>
<comment type="cofactor">
    <cofactor evidence="4 8 9">
        <name>Zn(2+)</name>
        <dbReference type="ChEBI" id="CHEBI:29105"/>
    </cofactor>
    <text evidence="4 8 9">Binds 2 Zn(2+) ions.</text>
</comment>
<comment type="subunit">
    <text evidence="3 4">Interacts with RNA polymerase.</text>
</comment>
<comment type="induction">
    <text evidence="2 3">At least 4-fold induced following infection by Sulfolobus turreted icosahedral virus 1 (STIV-1) in strain 2-2-12 (PubMed:18337566). Undetected in non-infected cells. Induced following STIV-1 infection, protein is detectable by 12 hours post-infection (p.i.) and increases until at least 24 hours p.i. in strain 2-2-12 (at protein level) (PubMed:29203770).</text>
</comment>
<comment type="domain">
    <text evidence="3 4 8">Has 2 zinc-ribbon domains (ZR-N and ZR-C); functionally important residues Lys-76, Lys-77 and Lys-78 are probably located at the tip of a domain that extends from ZR-C into the RNAP active site. The nature of these residues determines if the protein is involved in stalled transcript cleavage and thus activation (Asp and Glu residues in TFS1) or in RNAP inhibition (Lys or Arg residues in this protein TFS4). Increasing numbers of Lys residues lead to an increased ability to inhibit transcription. ZR-N interacts with Rpo1C and Rpo2 while ZR-C binds in the NTP entry funnel to sites in Rpo1N without reaching the active site (PubMed:34535646).</text>
</comment>
<comment type="miscellaneous">
    <text evidence="2">Strain 2-2-12 is a substrain of P2 that is highly susceptible to infection by Sulfolobus turreted icosahedral virus 1 (STIV-1).</text>
</comment>
<comment type="similarity">
    <text evidence="7">Belongs to the archaeal RpoM/eukaryotic RPA12/RPB9/RPC11 RNA polymerase family.</text>
</comment>
<gene>
    <name evidence="6" type="primary">tfs4</name>
    <name evidence="5" type="synonym">rpoM-2</name>
    <name type="ordered locus">SSO9221</name>
</gene>
<accession>Q97X43</accession>
<proteinExistence type="evidence at protein level"/>
<organism>
    <name type="scientific">Saccharolobus solfataricus (strain ATCC 35092 / DSM 1617 / JCM 11322 / P2)</name>
    <name type="common">Sulfolobus solfataricus</name>
    <dbReference type="NCBI Taxonomy" id="273057"/>
    <lineage>
        <taxon>Archaea</taxon>
        <taxon>Thermoproteota</taxon>
        <taxon>Thermoprotei</taxon>
        <taxon>Sulfolobales</taxon>
        <taxon>Sulfolobaceae</taxon>
        <taxon>Saccharolobus</taxon>
    </lineage>
</organism>
<sequence length="92" mass="10403">MRFCPKCGSFLKVKGNKMVCSKCGYSDHDVEKVILKENVAHENDKTIIADGETIEGRVAISLCPRCGSVRAILLNKKKRLYRCMTCNFVYNI</sequence>
<dbReference type="EMBL" id="AE006641">
    <property type="protein sequence ID" value="AAK42105.1"/>
    <property type="molecule type" value="Genomic_DNA"/>
</dbReference>
<dbReference type="PIR" id="B90356">
    <property type="entry name" value="B90356"/>
</dbReference>
<dbReference type="PDB" id="7OQY">
    <property type="method" value="EM"/>
    <property type="resolution" value="2.61 A"/>
    <property type="chains" value="Y=1-92"/>
</dbReference>
<dbReference type="PDBsum" id="7OQY"/>
<dbReference type="EMDB" id="EMD-13034"/>
<dbReference type="SMR" id="Q97X43"/>
<dbReference type="STRING" id="273057.SSO9221"/>
<dbReference type="PaxDb" id="273057-SSO9221"/>
<dbReference type="EnsemblBacteria" id="AAK42105">
    <property type="protein sequence ID" value="AAK42105"/>
    <property type="gene ID" value="SSO9221"/>
</dbReference>
<dbReference type="KEGG" id="sso:SSO9221"/>
<dbReference type="PATRIC" id="fig|273057.12.peg.1974"/>
<dbReference type="eggNOG" id="arCOG00579">
    <property type="taxonomic scope" value="Archaea"/>
</dbReference>
<dbReference type="HOGENOM" id="CLU_2406498_0_0_2"/>
<dbReference type="InParanoid" id="Q97X43"/>
<dbReference type="PhylomeDB" id="Q97X43"/>
<dbReference type="Proteomes" id="UP000001974">
    <property type="component" value="Chromosome"/>
</dbReference>
<dbReference type="GO" id="GO:0000428">
    <property type="term" value="C:DNA-directed RNA polymerase complex"/>
    <property type="evidence" value="ECO:0007669"/>
    <property type="project" value="UniProtKB-KW"/>
</dbReference>
<dbReference type="GO" id="GO:0003899">
    <property type="term" value="F:DNA-directed RNA polymerase activity"/>
    <property type="evidence" value="ECO:0007669"/>
    <property type="project" value="UniProtKB-EC"/>
</dbReference>
<dbReference type="GO" id="GO:0046872">
    <property type="term" value="F:metal ion binding"/>
    <property type="evidence" value="ECO:0007669"/>
    <property type="project" value="UniProtKB-KW"/>
</dbReference>
<dbReference type="GO" id="GO:0051607">
    <property type="term" value="P:defense response to virus"/>
    <property type="evidence" value="ECO:0007669"/>
    <property type="project" value="UniProtKB-KW"/>
</dbReference>
<dbReference type="GO" id="GO:0006351">
    <property type="term" value="P:DNA-templated transcription"/>
    <property type="evidence" value="ECO:0007669"/>
    <property type="project" value="InterPro"/>
</dbReference>
<dbReference type="GO" id="GO:0045892">
    <property type="term" value="P:negative regulation of DNA-templated transcription"/>
    <property type="evidence" value="ECO:0000314"/>
    <property type="project" value="UniProtKB"/>
</dbReference>
<dbReference type="Gene3D" id="2.20.70.10">
    <property type="match status" value="1"/>
</dbReference>
<dbReference type="InterPro" id="IPR019761">
    <property type="entry name" value="DNA-dir_RNA_pol-M_15_CS"/>
</dbReference>
<dbReference type="InterPro" id="IPR001529">
    <property type="entry name" value="Zn_ribbon_RPB9"/>
</dbReference>
<dbReference type="NCBIfam" id="NF047723">
    <property type="entry name" value="TransFacS4"/>
    <property type="match status" value="1"/>
</dbReference>
<dbReference type="Pfam" id="PF02150">
    <property type="entry name" value="Zn_ribbon_RPB9"/>
    <property type="match status" value="1"/>
</dbReference>
<dbReference type="SMART" id="SM00661">
    <property type="entry name" value="RPOL9"/>
    <property type="match status" value="1"/>
</dbReference>
<dbReference type="PROSITE" id="PS01030">
    <property type="entry name" value="RNA_POL_M_15KD"/>
    <property type="match status" value="1"/>
</dbReference>
<keyword id="KW-0002">3D-structure</keyword>
<keyword id="KW-0051">Antiviral defense</keyword>
<keyword id="KW-0240">DNA-directed RNA polymerase</keyword>
<keyword id="KW-0479">Metal-binding</keyword>
<keyword id="KW-1185">Reference proteome</keyword>
<keyword id="KW-0678">Repressor</keyword>
<keyword id="KW-0804">Transcription</keyword>
<keyword id="KW-0805">Transcription regulation</keyword>
<keyword id="KW-0862">Zinc</keyword>
<evidence type="ECO:0000255" key="1">
    <source>
        <dbReference type="PROSITE-ProRule" id="PRU10145"/>
    </source>
</evidence>
<evidence type="ECO:0000269" key="2">
    <source>
    </source>
</evidence>
<evidence type="ECO:0000269" key="3">
    <source>
    </source>
</evidence>
<evidence type="ECO:0000269" key="4">
    <source>
    </source>
</evidence>
<evidence type="ECO:0000303" key="5">
    <source>
    </source>
</evidence>
<evidence type="ECO:0000303" key="6">
    <source>
    </source>
</evidence>
<evidence type="ECO:0000305" key="7"/>
<evidence type="ECO:0000305" key="8">
    <source>
    </source>
</evidence>
<evidence type="ECO:0000312" key="9">
    <source>
        <dbReference type="PDB" id="7OQY"/>
    </source>
</evidence>
<evidence type="ECO:0007829" key="10">
    <source>
        <dbReference type="PDB" id="7OQY"/>
    </source>
</evidence>
<reference key="1">
    <citation type="journal article" date="2001" name="Proc. Natl. Acad. Sci. U.S.A.">
        <title>The complete genome of the crenarchaeon Sulfolobus solfataricus P2.</title>
        <authorList>
            <person name="She Q."/>
            <person name="Singh R.K."/>
            <person name="Confalonieri F."/>
            <person name="Zivanovic Y."/>
            <person name="Allard G."/>
            <person name="Awayez M.J."/>
            <person name="Chan-Weiher C.C.-Y."/>
            <person name="Clausen I.G."/>
            <person name="Curtis B.A."/>
            <person name="De Moors A."/>
            <person name="Erauso G."/>
            <person name="Fletcher C."/>
            <person name="Gordon P.M.K."/>
            <person name="Heikamp-de Jong I."/>
            <person name="Jeffries A.C."/>
            <person name="Kozera C.J."/>
            <person name="Medina N."/>
            <person name="Peng X."/>
            <person name="Thi-Ngoc H.P."/>
            <person name="Redder P."/>
            <person name="Schenk M.E."/>
            <person name="Theriault C."/>
            <person name="Tolstrup N."/>
            <person name="Charlebois R.L."/>
            <person name="Doolittle W.F."/>
            <person name="Duguet M."/>
            <person name="Gaasterland T."/>
            <person name="Garrett R.A."/>
            <person name="Ragan M.A."/>
            <person name="Sensen C.W."/>
            <person name="Van der Oost J."/>
        </authorList>
    </citation>
    <scope>NUCLEOTIDE SEQUENCE [LARGE SCALE GENOMIC DNA]</scope>
    <source>
        <strain>ATCC 35092 / DSM 1617 / JCM 11322 / P2</strain>
    </source>
</reference>
<reference key="2">
    <citation type="journal article" date="2008" name="J. Virol.">
        <title>Transcriptome analysis of infection of the archaeon Sulfolobus solfataricus with Sulfolobus turreted icosahedral virus.</title>
        <authorList>
            <person name="Ortmann A.C."/>
            <person name="Brumfield S.K."/>
            <person name="Walther J."/>
            <person name="McInnerney K."/>
            <person name="Brouns S.J."/>
            <person name="van de Werken H.J."/>
            <person name="Bothner B."/>
            <person name="Douglas T."/>
            <person name="van de Oost J."/>
            <person name="Young M.J."/>
        </authorList>
    </citation>
    <scope>INDUCTION BY VIRUS</scope>
    <source>
        <strain>2-2-12</strain>
    </source>
</reference>
<reference key="3">
    <citation type="journal article" date="2017" name="Nat. Commun.">
        <title>The transcript cleavage factor paralogue TFS4 is a potent RNA polymerase inhibitor.</title>
        <authorList>
            <person name="Fouqueau T."/>
            <person name="Blombach F."/>
            <person name="Hartman R."/>
            <person name="Cheung A.C.M."/>
            <person name="Young M.J."/>
            <person name="Werner F."/>
        </authorList>
    </citation>
    <scope>FUNCTION</scope>
    <scope>PROBABLE COFACTOR</scope>
    <scope>SUBUNIT</scope>
    <scope>INDUCTION BY VIRUS</scope>
    <scope>DOMAIN</scope>
    <scope>ACTIVE SITE</scope>
    <scope>MUTAGENESIS OF 72-ILE--LYS-78; 76-LYS--LYS-78; 76-LYS-LYS-77; LYS-76; 77-LYS-LYS-78; LYS-77 AND LYS-78</scope>
    <source>
        <strain>2-2-12</strain>
        <strain>ATCC 35092 / DSM 1617 / JCM 11322 / P2</strain>
    </source>
</reference>
<reference evidence="9" key="4">
    <citation type="journal article" date="2021" name="Nat. Commun.">
        <title>Structural basis of RNA polymerase inhibition by viral and host factors.</title>
        <authorList>
            <person name="Pilotto S."/>
            <person name="Fouqueau T."/>
            <person name="Lukoyanova N."/>
            <person name="Sheppard C."/>
            <person name="Lucas-Staat S."/>
            <person name="Diaz-Santin L.M."/>
            <person name="Matelska D."/>
            <person name="Prangishvili D."/>
            <person name="Cheung A.C.M."/>
            <person name="Werner F."/>
        </authorList>
    </citation>
    <scope>STRUCTURE BY ELECTRON MICROSCOPY (2.61 ANGSTROMS) IN COMPLEX WITH HOST (S.ACIDOCALDARIUS) RNA POLYMERASE</scope>
    <scope>FUNCTION</scope>
    <scope>SUBUNIT</scope>
    <scope>DOMAIN</scope>
    <source>
        <strain>2-2-12</strain>
        <strain>ATCC 35092 / DSM 1617 / JCM 11322 / P2</strain>
    </source>
</reference>
<feature type="chain" id="PRO_0000453930" description="Transcription factor S4">
    <location>
        <begin position="1"/>
        <end position="92"/>
    </location>
</feature>
<feature type="region of interest" description="ZR-N" evidence="4 8">
    <location>
        <begin position="1"/>
        <end position="31"/>
    </location>
</feature>
<feature type="region of interest" description="Flexible linker" evidence="4">
    <location>
        <begin position="32"/>
        <end position="56"/>
    </location>
</feature>
<feature type="region of interest" description="ZR-C" evidence="4 8">
    <location>
        <begin position="55"/>
        <end position="92"/>
    </location>
</feature>
<feature type="active site" evidence="3">
    <location>
        <position position="76"/>
    </location>
</feature>
<feature type="active site" evidence="3">
    <location>
        <position position="77"/>
    </location>
</feature>
<feature type="active site" evidence="3">
    <location>
        <position position="78"/>
    </location>
</feature>
<feature type="binding site" evidence="1 4 8 9">
    <location>
        <position position="4"/>
    </location>
    <ligand>
        <name>Zn(2+)</name>
        <dbReference type="ChEBI" id="CHEBI:29105"/>
        <label>1</label>
    </ligand>
</feature>
<feature type="binding site" evidence="1 4 8 9">
    <location>
        <position position="7"/>
    </location>
    <ligand>
        <name>Zn(2+)</name>
        <dbReference type="ChEBI" id="CHEBI:29105"/>
        <label>1</label>
    </ligand>
</feature>
<feature type="binding site" evidence="1 4 8 9">
    <location>
        <position position="20"/>
    </location>
    <ligand>
        <name>Zn(2+)</name>
        <dbReference type="ChEBI" id="CHEBI:29105"/>
        <label>1</label>
    </ligand>
</feature>
<feature type="binding site" evidence="1 4 8 9">
    <location>
        <position position="23"/>
    </location>
    <ligand>
        <name>Zn(2+)</name>
        <dbReference type="ChEBI" id="CHEBI:29105"/>
        <label>1</label>
    </ligand>
</feature>
<feature type="binding site" evidence="4 8 9">
    <location>
        <position position="63"/>
    </location>
    <ligand>
        <name>Zn(2+)</name>
        <dbReference type="ChEBI" id="CHEBI:29105"/>
        <label>2</label>
    </ligand>
</feature>
<feature type="binding site" evidence="4 8 9">
    <location>
        <position position="66"/>
    </location>
    <ligand>
        <name>Zn(2+)</name>
        <dbReference type="ChEBI" id="CHEBI:29105"/>
        <label>2</label>
    </ligand>
</feature>
<feature type="binding site" evidence="4 8 9">
    <location>
        <position position="83"/>
    </location>
    <ligand>
        <name>Zn(2+)</name>
        <dbReference type="ChEBI" id="CHEBI:29105"/>
        <label>2</label>
    </ligand>
</feature>
<feature type="binding site" evidence="4 8 9">
    <location>
        <position position="86"/>
    </location>
    <ligand>
        <name>Zn(2+)</name>
        <dbReference type="ChEBI" id="CHEBI:29105"/>
        <label>2</label>
    </ligand>
</feature>
<feature type="mutagenesis site" description="Does not inhibit RNAP activity, has acquired transcript cleavage activity (TFS4-tip1, with active tip of TFS1)." evidence="3">
    <original>ILLNKKK</original>
    <variation>YFWILQTRRADEPPT</variation>
    <location>
        <begin position="72"/>
        <end position="78"/>
    </location>
</feature>
<feature type="mutagenesis site" description="No longer inhibits RNAP activity." evidence="3">
    <original>KKK</original>
    <variation>AAA</variation>
    <location>
        <begin position="76"/>
        <end position="78"/>
    </location>
</feature>
<feature type="mutagenesis site" description="Mild decrease in RNAP activity." evidence="3">
    <original>KKK</original>
    <variation>AKA</variation>
    <location>
        <begin position="76"/>
        <end position="78"/>
    </location>
</feature>
<feature type="mutagenesis site" description="Wild-type inhibition of RNAP activity." evidence="3">
    <original>KKK</original>
    <variation>RRR</variation>
    <location>
        <begin position="76"/>
        <end position="78"/>
    </location>
</feature>
<feature type="mutagenesis site" description="Small decrease in RNAP activity." evidence="3">
    <original>KK</original>
    <variation>AA</variation>
    <location>
        <begin position="76"/>
        <end position="77"/>
    </location>
</feature>
<feature type="mutagenesis site" description="Very small decrease in RNAP activity." evidence="3">
    <original>K</original>
    <variation>A</variation>
    <location>
        <position position="76"/>
    </location>
</feature>
<feature type="mutagenesis site" description="Medium decrease in RNAP activity." evidence="3">
    <original>KK</original>
    <variation>AA</variation>
    <location>
        <begin position="77"/>
        <end position="78"/>
    </location>
</feature>
<feature type="mutagenesis site" description="Very small decrease in RNAP activity." evidence="3">
    <original>K</original>
    <variation>A</variation>
    <location>
        <position position="77"/>
    </location>
</feature>
<feature type="mutagenesis site" description="Mild decrease in RNAP activity." evidence="3">
    <original>K</original>
    <variation>A</variation>
    <location>
        <position position="78"/>
    </location>
</feature>
<feature type="turn" evidence="10">
    <location>
        <begin position="5"/>
        <end position="7"/>
    </location>
</feature>
<feature type="strand" evidence="10">
    <location>
        <begin position="12"/>
        <end position="14"/>
    </location>
</feature>
<feature type="strand" evidence="10">
    <location>
        <begin position="17"/>
        <end position="19"/>
    </location>
</feature>
<feature type="turn" evidence="10">
    <location>
        <begin position="21"/>
        <end position="23"/>
    </location>
</feature>
<feature type="strand" evidence="10">
    <location>
        <begin position="34"/>
        <end position="38"/>
    </location>
</feature>
<feature type="strand" evidence="10">
    <location>
        <begin position="53"/>
        <end position="55"/>
    </location>
</feature>
<feature type="strand" evidence="10">
    <location>
        <begin position="58"/>
        <end position="60"/>
    </location>
</feature>
<feature type="strand" evidence="10">
    <location>
        <begin position="64"/>
        <end position="66"/>
    </location>
</feature>
<feature type="strand" evidence="10">
    <location>
        <begin position="69"/>
        <end position="75"/>
    </location>
</feature>
<feature type="turn" evidence="10">
    <location>
        <begin position="76"/>
        <end position="79"/>
    </location>
</feature>
<feature type="strand" evidence="10">
    <location>
        <begin position="80"/>
        <end position="83"/>
    </location>
</feature>
<feature type="turn" evidence="10">
    <location>
        <begin position="84"/>
        <end position="86"/>
    </location>
</feature>
<feature type="strand" evidence="10">
    <location>
        <begin position="89"/>
        <end position="91"/>
    </location>
</feature>